<comment type="function">
    <text evidence="1 4 6">Transcriptional activator that regulates SEMA3C and PLXNA2 (PubMed:19666519). May regulate genes that protect epithelial cells from bacterial infection (By similarity). Involved in gene regulation specifically in the gastric epithelium (By similarity). Involved in bone morphogenetic protein (BMP)-mediated cardiac-specific gene expression (PubMed:15329343). Binds to BMP response element (BMPRE) DNA sequences within cardiac activating regions (PubMed:15329343).</text>
</comment>
<comment type="subunit">
    <text evidence="5">Interacts with LMCD1.</text>
</comment>
<comment type="subcellular location">
    <subcellularLocation>
        <location evidence="5">Nucleus</location>
    </subcellularLocation>
</comment>
<comment type="alternative products">
    <event type="alternative initiation"/>
    <isoform>
        <id>Q61169-1</id>
        <name>1</name>
        <sequence type="displayed"/>
    </isoform>
    <isoform>
        <id>Q61169-2</id>
        <name>2</name>
        <sequence type="described" ref="VSP_035779"/>
    </isoform>
</comment>
<comment type="tissue specificity">
    <text>Expressed in myocardium, vascular smooth muscle, gut epithelium, and osteoclasts.</text>
</comment>
<comment type="domain">
    <text evidence="5">The GATA-type zinc fingers mediate interaction with LMCD1.</text>
</comment>
<comment type="miscellaneous">
    <molecule>Isoform 2</molecule>
    <text evidence="9">Produced by alternative initiation at Met-147 of isoform 1.</text>
</comment>
<comment type="sequence caution" evidence="9">
    <conflict type="frameshift">
        <sequence resource="EMBL-CDS" id="AAB37426"/>
    </conflict>
</comment>
<comment type="sequence caution" evidence="9">
    <conflict type="frameshift">
        <sequence resource="EMBL-CDS" id="AAC52841"/>
    </conflict>
</comment>
<proteinExistence type="evidence at protein level"/>
<accession>Q61169</accession>
<accession>P97729</accession>
<accession>Q3UQJ2</accession>
<accession>Q9QZK3</accession>
<dbReference type="EMBL" id="S82462">
    <property type="protein sequence ID" value="AAB37426.1"/>
    <property type="status" value="ALT_FRAME"/>
    <property type="molecule type" value="mRNA"/>
</dbReference>
<dbReference type="EMBL" id="AF179425">
    <property type="protein sequence ID" value="AAD55267.1"/>
    <property type="molecule type" value="mRNA"/>
</dbReference>
<dbReference type="EMBL" id="AK142381">
    <property type="protein sequence ID" value="BAE25049.1"/>
    <property type="molecule type" value="mRNA"/>
</dbReference>
<dbReference type="EMBL" id="CH466592">
    <property type="protein sequence ID" value="EDL22985.1"/>
    <property type="molecule type" value="Genomic_DNA"/>
</dbReference>
<dbReference type="EMBL" id="U51335">
    <property type="protein sequence ID" value="AAC52841.1"/>
    <property type="status" value="ALT_FRAME"/>
    <property type="molecule type" value="mRNA"/>
</dbReference>
<dbReference type="CCDS" id="CCDS29059.1">
    <molecule id="Q61169-1"/>
</dbReference>
<dbReference type="RefSeq" id="NP_034388.2">
    <molecule id="Q61169-1"/>
    <property type="nucleotide sequence ID" value="NM_010258.3"/>
</dbReference>
<dbReference type="SMR" id="Q61169"/>
<dbReference type="BioGRID" id="199843">
    <property type="interactions" value="12"/>
</dbReference>
<dbReference type="FunCoup" id="Q61169">
    <property type="interactions" value="550"/>
</dbReference>
<dbReference type="IntAct" id="Q61169">
    <property type="interactions" value="3"/>
</dbReference>
<dbReference type="MINT" id="Q61169"/>
<dbReference type="STRING" id="10090.ENSMUSP00000041774"/>
<dbReference type="iPTMnet" id="Q61169"/>
<dbReference type="PhosphoSitePlus" id="Q61169"/>
<dbReference type="PaxDb" id="10090-ENSMUSP00000041774"/>
<dbReference type="PeptideAtlas" id="Q61169"/>
<dbReference type="ProteomicsDB" id="271191">
    <molecule id="Q61169-1"/>
</dbReference>
<dbReference type="ProteomicsDB" id="271192">
    <molecule id="Q61169-2"/>
</dbReference>
<dbReference type="Antibodypedia" id="22009">
    <property type="antibodies" value="506 antibodies from 36 providers"/>
</dbReference>
<dbReference type="DNASU" id="14465"/>
<dbReference type="Ensembl" id="ENSMUST00000047762.10">
    <molecule id="Q61169-1"/>
    <property type="protein sequence ID" value="ENSMUSP00000041774.8"/>
    <property type="gene ID" value="ENSMUSG00000005836.11"/>
</dbReference>
<dbReference type="GeneID" id="14465"/>
<dbReference type="KEGG" id="mmu:14465"/>
<dbReference type="UCSC" id="uc008ebj.1">
    <molecule id="Q61169-1"/>
    <property type="organism name" value="mouse"/>
</dbReference>
<dbReference type="AGR" id="MGI:107516"/>
<dbReference type="CTD" id="2627"/>
<dbReference type="MGI" id="MGI:107516">
    <property type="gene designation" value="Gata6"/>
</dbReference>
<dbReference type="VEuPathDB" id="HostDB:ENSMUSG00000005836"/>
<dbReference type="eggNOG" id="KOG1601">
    <property type="taxonomic scope" value="Eukaryota"/>
</dbReference>
<dbReference type="GeneTree" id="ENSGT00940000160814"/>
<dbReference type="HOGENOM" id="CLU_027524_0_0_1"/>
<dbReference type="InParanoid" id="Q61169"/>
<dbReference type="OMA" id="ENSMLHC"/>
<dbReference type="OrthoDB" id="515401at2759"/>
<dbReference type="PhylomeDB" id="Q61169"/>
<dbReference type="TreeFam" id="TF315391"/>
<dbReference type="Reactome" id="R-MMU-5683826">
    <property type="pathway name" value="Surfactant metabolism"/>
</dbReference>
<dbReference type="Reactome" id="R-MMU-983231">
    <property type="pathway name" value="Factors involved in megakaryocyte development and platelet production"/>
</dbReference>
<dbReference type="BioGRID-ORCS" id="14465">
    <property type="hits" value="4 hits in 83 CRISPR screens"/>
</dbReference>
<dbReference type="PRO" id="PR:Q61169"/>
<dbReference type="Proteomes" id="UP000000589">
    <property type="component" value="Chromosome 18"/>
</dbReference>
<dbReference type="RNAct" id="Q61169">
    <property type="molecule type" value="protein"/>
</dbReference>
<dbReference type="Bgee" id="ENSMUSG00000005836">
    <property type="expression patterns" value="Expressed in cardiac atrium and 233 other cell types or tissues"/>
</dbReference>
<dbReference type="ExpressionAtlas" id="Q61169">
    <property type="expression patterns" value="baseline and differential"/>
</dbReference>
<dbReference type="GO" id="GO:0031965">
    <property type="term" value="C:nuclear membrane"/>
    <property type="evidence" value="ECO:0007669"/>
    <property type="project" value="Ensembl"/>
</dbReference>
<dbReference type="GO" id="GO:0005654">
    <property type="term" value="C:nucleoplasm"/>
    <property type="evidence" value="ECO:0000304"/>
    <property type="project" value="Reactome"/>
</dbReference>
<dbReference type="GO" id="GO:0005634">
    <property type="term" value="C:nucleus"/>
    <property type="evidence" value="ECO:0000314"/>
    <property type="project" value="MGI"/>
</dbReference>
<dbReference type="GO" id="GO:0005667">
    <property type="term" value="C:transcription regulator complex"/>
    <property type="evidence" value="ECO:0000314"/>
    <property type="project" value="MGI"/>
</dbReference>
<dbReference type="GO" id="GO:0003682">
    <property type="term" value="F:chromatin binding"/>
    <property type="evidence" value="ECO:0000314"/>
    <property type="project" value="MGI"/>
</dbReference>
<dbReference type="GO" id="GO:0003677">
    <property type="term" value="F:DNA binding"/>
    <property type="evidence" value="ECO:0000314"/>
    <property type="project" value="MGI"/>
</dbReference>
<dbReference type="GO" id="GO:0003700">
    <property type="term" value="F:DNA-binding transcription factor activity"/>
    <property type="evidence" value="ECO:0000314"/>
    <property type="project" value="MGI"/>
</dbReference>
<dbReference type="GO" id="GO:0000981">
    <property type="term" value="F:DNA-binding transcription factor activity, RNA polymerase II-specific"/>
    <property type="evidence" value="ECO:0000314"/>
    <property type="project" value="MGI"/>
</dbReference>
<dbReference type="GO" id="GO:0051525">
    <property type="term" value="F:NFAT protein binding"/>
    <property type="evidence" value="ECO:0007669"/>
    <property type="project" value="Ensembl"/>
</dbReference>
<dbReference type="GO" id="GO:0019901">
    <property type="term" value="F:protein kinase binding"/>
    <property type="evidence" value="ECO:0007669"/>
    <property type="project" value="Ensembl"/>
</dbReference>
<dbReference type="GO" id="GO:0000978">
    <property type="term" value="F:RNA polymerase II cis-regulatory region sequence-specific DNA binding"/>
    <property type="evidence" value="ECO:0000314"/>
    <property type="project" value="MGI"/>
</dbReference>
<dbReference type="GO" id="GO:0061629">
    <property type="term" value="F:RNA polymerase II-specific DNA-binding transcription factor binding"/>
    <property type="evidence" value="ECO:0000353"/>
    <property type="project" value="BHF-UCL"/>
</dbReference>
<dbReference type="GO" id="GO:0043565">
    <property type="term" value="F:sequence-specific DNA binding"/>
    <property type="evidence" value="ECO:0000314"/>
    <property type="project" value="MGI"/>
</dbReference>
<dbReference type="GO" id="GO:0000976">
    <property type="term" value="F:transcription cis-regulatory region binding"/>
    <property type="evidence" value="ECO:0000266"/>
    <property type="project" value="MGI"/>
</dbReference>
<dbReference type="GO" id="GO:0001223">
    <property type="term" value="F:transcription coactivator binding"/>
    <property type="evidence" value="ECO:0000353"/>
    <property type="project" value="BHF-UCL"/>
</dbReference>
<dbReference type="GO" id="GO:0008270">
    <property type="term" value="F:zinc ion binding"/>
    <property type="evidence" value="ECO:0007669"/>
    <property type="project" value="UniProtKB-KW"/>
</dbReference>
<dbReference type="GO" id="GO:0048645">
    <property type="term" value="P:animal organ formation"/>
    <property type="evidence" value="ECO:0000315"/>
    <property type="project" value="MGI"/>
</dbReference>
<dbReference type="GO" id="GO:0055007">
    <property type="term" value="P:cardiac muscle cell differentiation"/>
    <property type="evidence" value="ECO:0000315"/>
    <property type="project" value="MGI"/>
</dbReference>
<dbReference type="GO" id="GO:0060038">
    <property type="term" value="P:cardiac muscle cell proliferation"/>
    <property type="evidence" value="ECO:0000316"/>
    <property type="project" value="MGI"/>
</dbReference>
<dbReference type="GO" id="GO:0014898">
    <property type="term" value="P:cardiac muscle hypertrophy in response to stress"/>
    <property type="evidence" value="ECO:0000315"/>
    <property type="project" value="MGI"/>
</dbReference>
<dbReference type="GO" id="GO:0048738">
    <property type="term" value="P:cardiac muscle tissue development"/>
    <property type="evidence" value="ECO:0000316"/>
    <property type="project" value="MGI"/>
</dbReference>
<dbReference type="GO" id="GO:0060947">
    <property type="term" value="P:cardiac vascular smooth muscle cell differentiation"/>
    <property type="evidence" value="ECO:0007669"/>
    <property type="project" value="Ensembl"/>
</dbReference>
<dbReference type="GO" id="GO:0071773">
    <property type="term" value="P:cellular response to BMP stimulus"/>
    <property type="evidence" value="ECO:0000314"/>
    <property type="project" value="MGI"/>
</dbReference>
<dbReference type="GO" id="GO:0071371">
    <property type="term" value="P:cellular response to gonadotropin stimulus"/>
    <property type="evidence" value="ECO:0000314"/>
    <property type="project" value="MGI"/>
</dbReference>
<dbReference type="GO" id="GO:0071456">
    <property type="term" value="P:cellular response to hypoxia"/>
    <property type="evidence" value="ECO:0007669"/>
    <property type="project" value="Ensembl"/>
</dbReference>
<dbReference type="GO" id="GO:0060486">
    <property type="term" value="P:club cell differentiation"/>
    <property type="evidence" value="ECO:0000316"/>
    <property type="project" value="MGI"/>
</dbReference>
<dbReference type="GO" id="GO:0035987">
    <property type="term" value="P:endodermal cell differentiation"/>
    <property type="evidence" value="ECO:0000315"/>
    <property type="project" value="MGI"/>
</dbReference>
<dbReference type="GO" id="GO:0007493">
    <property type="term" value="P:endodermal cell fate determination"/>
    <property type="evidence" value="ECO:0000314"/>
    <property type="project" value="MGI"/>
</dbReference>
<dbReference type="GO" id="GO:0030855">
    <property type="term" value="P:epithelial cell differentiation"/>
    <property type="evidence" value="ECO:0000315"/>
    <property type="project" value="MGI"/>
</dbReference>
<dbReference type="GO" id="GO:0070315">
    <property type="term" value="P:G1 to G0 transition involved in cell differentiation"/>
    <property type="evidence" value="ECO:0007669"/>
    <property type="project" value="Ensembl"/>
</dbReference>
<dbReference type="GO" id="GO:0010467">
    <property type="term" value="P:gene expression"/>
    <property type="evidence" value="ECO:0000315"/>
    <property type="project" value="MGI"/>
</dbReference>
<dbReference type="GO" id="GO:0060047">
    <property type="term" value="P:heart contraction"/>
    <property type="evidence" value="ECO:0000315"/>
    <property type="project" value="MGI"/>
</dbReference>
<dbReference type="GO" id="GO:0001701">
    <property type="term" value="P:in utero embryonic development"/>
    <property type="evidence" value="ECO:0000315"/>
    <property type="project" value="MGI"/>
</dbReference>
<dbReference type="GO" id="GO:0060575">
    <property type="term" value="P:intestinal epithelial cell differentiation"/>
    <property type="evidence" value="ECO:0000266"/>
    <property type="project" value="MGI"/>
</dbReference>
<dbReference type="GO" id="GO:0001889">
    <property type="term" value="P:liver development"/>
    <property type="evidence" value="ECO:0000315"/>
    <property type="project" value="MGI"/>
</dbReference>
<dbReference type="GO" id="GO:0060430">
    <property type="term" value="P:lung saccule development"/>
    <property type="evidence" value="ECO:0000316"/>
    <property type="project" value="MGI"/>
</dbReference>
<dbReference type="GO" id="GO:0008584">
    <property type="term" value="P:male gonad development"/>
    <property type="evidence" value="ECO:0007669"/>
    <property type="project" value="Ensembl"/>
</dbReference>
<dbReference type="GO" id="GO:0043066">
    <property type="term" value="P:negative regulation of apoptotic process"/>
    <property type="evidence" value="ECO:0007669"/>
    <property type="project" value="Ensembl"/>
</dbReference>
<dbReference type="GO" id="GO:1904003">
    <property type="term" value="P:negative regulation of sebum secreting cell proliferation"/>
    <property type="evidence" value="ECO:0007669"/>
    <property type="project" value="Ensembl"/>
</dbReference>
<dbReference type="GO" id="GO:0000122">
    <property type="term" value="P:negative regulation of transcription by RNA polymerase II"/>
    <property type="evidence" value="ECO:0007669"/>
    <property type="project" value="Ensembl"/>
</dbReference>
<dbReference type="GO" id="GO:0032911">
    <property type="term" value="P:negative regulation of transforming growth factor beta1 production"/>
    <property type="evidence" value="ECO:0007669"/>
    <property type="project" value="Ensembl"/>
</dbReference>
<dbReference type="GO" id="GO:0032912">
    <property type="term" value="P:negative regulation of transforming growth factor beta2 production"/>
    <property type="evidence" value="ECO:0007669"/>
    <property type="project" value="Ensembl"/>
</dbReference>
<dbReference type="GO" id="GO:0003148">
    <property type="term" value="P:outflow tract septum morphogenesis"/>
    <property type="evidence" value="ECO:0007669"/>
    <property type="project" value="Ensembl"/>
</dbReference>
<dbReference type="GO" id="GO:0031016">
    <property type="term" value="P:pancreas development"/>
    <property type="evidence" value="ECO:0000315"/>
    <property type="project" value="MGI"/>
</dbReference>
<dbReference type="GO" id="GO:0003310">
    <property type="term" value="P:pancreatic A cell differentiation"/>
    <property type="evidence" value="ECO:0000315"/>
    <property type="project" value="MGI"/>
</dbReference>
<dbReference type="GO" id="GO:0006644">
    <property type="term" value="P:phospholipid metabolic process"/>
    <property type="evidence" value="ECO:0000316"/>
    <property type="project" value="MGI"/>
</dbReference>
<dbReference type="GO" id="GO:0045766">
    <property type="term" value="P:positive regulation of angiogenesis"/>
    <property type="evidence" value="ECO:0007669"/>
    <property type="project" value="Ensembl"/>
</dbReference>
<dbReference type="GO" id="GO:0060045">
    <property type="term" value="P:positive regulation of cardiac muscle cell proliferation"/>
    <property type="evidence" value="ECO:0000316"/>
    <property type="project" value="MGI"/>
</dbReference>
<dbReference type="GO" id="GO:0110024">
    <property type="term" value="P:positive regulation of cardiac muscle myoblast proliferation"/>
    <property type="evidence" value="ECO:0007669"/>
    <property type="project" value="Ensembl"/>
</dbReference>
<dbReference type="GO" id="GO:0045893">
    <property type="term" value="P:positive regulation of DNA-templated transcription"/>
    <property type="evidence" value="ECO:0000314"/>
    <property type="project" value="MGI"/>
</dbReference>
<dbReference type="GO" id="GO:0045944">
    <property type="term" value="P:positive regulation of transcription by RNA polymerase II"/>
    <property type="evidence" value="ECO:0000314"/>
    <property type="project" value="MGI"/>
</dbReference>
<dbReference type="GO" id="GO:0002759">
    <property type="term" value="P:regulation of antimicrobial humoral response"/>
    <property type="evidence" value="ECO:0007669"/>
    <property type="project" value="Ensembl"/>
</dbReference>
<dbReference type="GO" id="GO:0010468">
    <property type="term" value="P:regulation of gene expression"/>
    <property type="evidence" value="ECO:0000316"/>
    <property type="project" value="MGI"/>
</dbReference>
<dbReference type="GO" id="GO:0043627">
    <property type="term" value="P:response to estrogen"/>
    <property type="evidence" value="ECO:0000314"/>
    <property type="project" value="MGI"/>
</dbReference>
<dbReference type="GO" id="GO:0032526">
    <property type="term" value="P:response to retinoic acid"/>
    <property type="evidence" value="ECO:0007669"/>
    <property type="project" value="Ensembl"/>
</dbReference>
<dbReference type="GO" id="GO:0009410">
    <property type="term" value="P:response to xenobiotic stimulus"/>
    <property type="evidence" value="ECO:0007669"/>
    <property type="project" value="Ensembl"/>
</dbReference>
<dbReference type="GO" id="GO:0001949">
    <property type="term" value="P:sebaceous gland cell differentiation"/>
    <property type="evidence" value="ECO:0007669"/>
    <property type="project" value="Ensembl"/>
</dbReference>
<dbReference type="GO" id="GO:0003163">
    <property type="term" value="P:sinoatrial node development"/>
    <property type="evidence" value="ECO:0000315"/>
    <property type="project" value="MGI"/>
</dbReference>
<dbReference type="GO" id="GO:0098773">
    <property type="term" value="P:skin epidermis development"/>
    <property type="evidence" value="ECO:0007669"/>
    <property type="project" value="Ensembl"/>
</dbReference>
<dbReference type="GO" id="GO:0048863">
    <property type="term" value="P:stem cell differentiation"/>
    <property type="evidence" value="ECO:0000315"/>
    <property type="project" value="MGI"/>
</dbReference>
<dbReference type="GO" id="GO:0035239">
    <property type="term" value="P:tube morphogenesis"/>
    <property type="evidence" value="ECO:0000316"/>
    <property type="project" value="MGI"/>
</dbReference>
<dbReference type="GO" id="GO:0003309">
    <property type="term" value="P:type B pancreatic cell differentiation"/>
    <property type="evidence" value="ECO:0000315"/>
    <property type="project" value="MGI"/>
</dbReference>
<dbReference type="GO" id="GO:0060510">
    <property type="term" value="P:type II pneumocyte differentiation"/>
    <property type="evidence" value="ECO:0000316"/>
    <property type="project" value="MGI"/>
</dbReference>
<dbReference type="CDD" id="cd00202">
    <property type="entry name" value="ZnF_GATA"/>
    <property type="match status" value="2"/>
</dbReference>
<dbReference type="FunFam" id="3.30.50.10:FF:000001">
    <property type="entry name" value="GATA transcription factor (GATAd)"/>
    <property type="match status" value="1"/>
</dbReference>
<dbReference type="FunFam" id="3.30.50.10:FF:000032">
    <property type="entry name" value="Transcription factor GATA-3"/>
    <property type="match status" value="1"/>
</dbReference>
<dbReference type="Gene3D" id="3.30.50.10">
    <property type="entry name" value="Erythroid Transcription Factor GATA-1, subunit A"/>
    <property type="match status" value="2"/>
</dbReference>
<dbReference type="InterPro" id="IPR008013">
    <property type="entry name" value="GATA_N"/>
</dbReference>
<dbReference type="InterPro" id="IPR039355">
    <property type="entry name" value="Transcription_factor_GATA"/>
</dbReference>
<dbReference type="InterPro" id="IPR000679">
    <property type="entry name" value="Znf_GATA"/>
</dbReference>
<dbReference type="InterPro" id="IPR013088">
    <property type="entry name" value="Znf_NHR/GATA"/>
</dbReference>
<dbReference type="PANTHER" id="PTHR10071">
    <property type="entry name" value="TRANSCRIPTION FACTOR GATA FAMILY MEMBER"/>
    <property type="match status" value="1"/>
</dbReference>
<dbReference type="PANTHER" id="PTHR10071:SF23">
    <property type="entry name" value="TRANSCRIPTION FACTOR GATA-6"/>
    <property type="match status" value="1"/>
</dbReference>
<dbReference type="Pfam" id="PF00320">
    <property type="entry name" value="GATA"/>
    <property type="match status" value="2"/>
</dbReference>
<dbReference type="Pfam" id="PF05349">
    <property type="entry name" value="GATA-N"/>
    <property type="match status" value="1"/>
</dbReference>
<dbReference type="PRINTS" id="PR00619">
    <property type="entry name" value="GATAZNFINGER"/>
</dbReference>
<dbReference type="SMART" id="SM00401">
    <property type="entry name" value="ZnF_GATA"/>
    <property type="match status" value="2"/>
</dbReference>
<dbReference type="SUPFAM" id="SSF57716">
    <property type="entry name" value="Glucocorticoid receptor-like (DNA-binding domain)"/>
    <property type="match status" value="2"/>
</dbReference>
<dbReference type="PROSITE" id="PS00344">
    <property type="entry name" value="GATA_ZN_FINGER_1"/>
    <property type="match status" value="2"/>
</dbReference>
<dbReference type="PROSITE" id="PS50114">
    <property type="entry name" value="GATA_ZN_FINGER_2"/>
    <property type="match status" value="2"/>
</dbReference>
<gene>
    <name type="primary">Gata6</name>
</gene>
<name>GATA6_MOUSE</name>
<organism>
    <name type="scientific">Mus musculus</name>
    <name type="common">Mouse</name>
    <dbReference type="NCBI Taxonomy" id="10090"/>
    <lineage>
        <taxon>Eukaryota</taxon>
        <taxon>Metazoa</taxon>
        <taxon>Chordata</taxon>
        <taxon>Craniata</taxon>
        <taxon>Vertebrata</taxon>
        <taxon>Euteleostomi</taxon>
        <taxon>Mammalia</taxon>
        <taxon>Eutheria</taxon>
        <taxon>Euarchontoglires</taxon>
        <taxon>Glires</taxon>
        <taxon>Rodentia</taxon>
        <taxon>Myomorpha</taxon>
        <taxon>Muroidea</taxon>
        <taxon>Muridae</taxon>
        <taxon>Murinae</taxon>
        <taxon>Mus</taxon>
        <taxon>Mus</taxon>
    </lineage>
</organism>
<feature type="chain" id="PRO_0000083424" description="Transcription factor GATA-6">
    <location>
        <begin position="1"/>
        <end position="589"/>
    </location>
</feature>
<feature type="zinc finger region" description="GATA-type 1" evidence="2">
    <location>
        <begin position="384"/>
        <end position="408"/>
    </location>
</feature>
<feature type="zinc finger region" description="GATA-type 2" evidence="2">
    <location>
        <begin position="438"/>
        <end position="462"/>
    </location>
</feature>
<feature type="region of interest" description="Disordered" evidence="3">
    <location>
        <begin position="17"/>
        <end position="62"/>
    </location>
</feature>
<feature type="region of interest" description="Disordered" evidence="3">
    <location>
        <begin position="209"/>
        <end position="274"/>
    </location>
</feature>
<feature type="region of interest" description="Disordered" evidence="3">
    <location>
        <begin position="479"/>
        <end position="534"/>
    </location>
</feature>
<feature type="compositionally biased region" description="Low complexity" evidence="3">
    <location>
        <begin position="17"/>
        <end position="47"/>
    </location>
</feature>
<feature type="compositionally biased region" description="Gly residues" evidence="3">
    <location>
        <begin position="234"/>
        <end position="251"/>
    </location>
</feature>
<feature type="compositionally biased region" description="Basic residues" evidence="3">
    <location>
        <begin position="484"/>
        <end position="493"/>
    </location>
</feature>
<feature type="compositionally biased region" description="Polar residues" evidence="3">
    <location>
        <begin position="494"/>
        <end position="534"/>
    </location>
</feature>
<feature type="modified residue" description="Phosphoserine" evidence="1">
    <location>
        <position position="266"/>
    </location>
</feature>
<feature type="cross-link" description="Glycyl lysine isopeptide (Lys-Gly) (interchain with G-Cter in SUMO2)" evidence="1">
    <location>
        <position position="423"/>
    </location>
</feature>
<feature type="cross-link" description="Glycyl lysine isopeptide (Lys-Gly) (interchain with G-Cter in SUMO2)" evidence="1">
    <location>
        <position position="467"/>
    </location>
</feature>
<feature type="cross-link" description="Glycyl lysine isopeptide (Lys-Gly) (interchain with G-Cter in SUMO2)" evidence="1">
    <location>
        <position position="478"/>
    </location>
</feature>
<feature type="splice variant" id="VSP_035779" description="In isoform 2." evidence="7 8">
    <location>
        <begin position="1"/>
        <end position="146"/>
    </location>
</feature>
<feature type="sequence conflict" description="In Ref. 1; AAB37426." evidence="9" ref="1">
    <original>S</original>
    <variation>T</variation>
    <location>
        <position position="297"/>
    </location>
</feature>
<feature type="sequence conflict" description="In Ref. 5; AAC52841." evidence="9" ref="5">
    <original>G</original>
    <variation>A</variation>
    <location>
        <position position="416"/>
    </location>
</feature>
<feature type="sequence conflict" description="In Ref. 5; AAC52841." evidence="9" ref="5">
    <original>G</original>
    <variation>R</variation>
    <location>
        <position position="536"/>
    </location>
</feature>
<feature type="sequence conflict" description="In Ref. 5; AAC52841." evidence="9" ref="5">
    <location>
        <position position="538"/>
    </location>
</feature>
<feature type="sequence conflict" description="In Ref. 5; AAC52841." evidence="9" ref="5">
    <original>N</original>
    <variation>K</variation>
    <location>
        <position position="546"/>
    </location>
</feature>
<feature type="sequence conflict" description="In Ref. 1; AAB37426 and 2; AAD55267." evidence="9" ref="1 2">
    <original>A</original>
    <variation>V</variation>
    <location>
        <position position="589"/>
    </location>
</feature>
<sequence length="589" mass="59307">MALTDGGWCLPKRFGAAAADAGDSGPFPAREPSSPLSPISSSSSSCSRGGDRGPCGASNCRTPQLDAEAVAGPPGRSLLLSPYASHPFAAAHGAAAPGVAGPGSALSTWEDLLLFTDLDQAATASKLLWSSRGAKLSPFAAEQPEEMYQTLAALSSQGPAAYDGAPGGFVHSAAAAAAAAAAASSPVYVPTTRVGSMLSGLPYLQGAGSGPSNHAGGAGAHPGWSQASADSPPYGGGGAAGGGAAGPGGAGSATAHASARFPYSPSPPMANGAARDPGGYVAAGGTGAGSVSGGGGSLAAMGGREHQYSSLSAARPLNGTYHHHHHHHPTYSPYMAAPLTPAWPAGPFETPVLHSLQGRAGAPLPVPRGPSTDLLEDLSESRECVNCGSIQTPLWRRDGTGHYLCNACGLYSKMNGLSRPLIKPQKRVPSSRRLGLSCANCHTTTTTLWRRNAEGEPVCNACGLYMKLHGVPRPLAMKKEGIQTRKRKPKNINKSKACSGNSSGSVPMTPTSSSSNSDDCTKNTSPSTQATTSGVGASVMSAVGENANPENSDLKYSGQDGLYIGVSLSSPAEVTSSVRQDSWCALALA</sequence>
<evidence type="ECO:0000250" key="1">
    <source>
        <dbReference type="UniProtKB" id="Q92908"/>
    </source>
</evidence>
<evidence type="ECO:0000255" key="2">
    <source>
        <dbReference type="PROSITE-ProRule" id="PRU00094"/>
    </source>
</evidence>
<evidence type="ECO:0000256" key="3">
    <source>
        <dbReference type="SAM" id="MobiDB-lite"/>
    </source>
</evidence>
<evidence type="ECO:0000269" key="4">
    <source>
    </source>
</evidence>
<evidence type="ECO:0000269" key="5">
    <source>
    </source>
</evidence>
<evidence type="ECO:0000269" key="6">
    <source>
    </source>
</evidence>
<evidence type="ECO:0000303" key="7">
    <source>
    </source>
</evidence>
<evidence type="ECO:0000303" key="8">
    <source ref="2"/>
</evidence>
<evidence type="ECO:0000305" key="9"/>
<keyword id="KW-0010">Activator</keyword>
<keyword id="KW-0024">Alternative initiation</keyword>
<keyword id="KW-0238">DNA-binding</keyword>
<keyword id="KW-1017">Isopeptide bond</keyword>
<keyword id="KW-0479">Metal-binding</keyword>
<keyword id="KW-0539">Nucleus</keyword>
<keyword id="KW-0597">Phosphoprotein</keyword>
<keyword id="KW-1185">Reference proteome</keyword>
<keyword id="KW-0677">Repeat</keyword>
<keyword id="KW-0804">Transcription</keyword>
<keyword id="KW-0805">Transcription regulation</keyword>
<keyword id="KW-0832">Ubl conjugation</keyword>
<keyword id="KW-0862">Zinc</keyword>
<keyword id="KW-0863">Zinc-finger</keyword>
<reference key="1">
    <citation type="journal article" date="1996" name="Dev. Biol.">
        <title>GATA-6: a zinc finger transcription factor that is expressed in multiple cell lineages derived from lateral mesoderm.</title>
        <authorList>
            <person name="Morrisey E.E."/>
            <person name="Ip H.S."/>
            <person name="Lu M.M."/>
            <person name="Parmacek M.S."/>
        </authorList>
    </citation>
    <scope>NUCLEOTIDE SEQUENCE [MRNA] (ISOFORM 2)</scope>
    <source>
        <tissue>Heart</tissue>
    </source>
</reference>
<reference key="2">
    <citation type="submission" date="1999-08" db="EMBL/GenBank/DDBJ databases">
        <authorList>
            <person name="Katsuoka F."/>
            <person name="Motohashi H."/>
            <person name="Yamamoto M."/>
        </authorList>
    </citation>
    <scope>NUCLEOTIDE SEQUENCE [MRNA] (ISOFORM 2)</scope>
    <source>
        <strain>C57BL/6 X DBA/2</strain>
        <tissue>Heart</tissue>
    </source>
</reference>
<reference key="3">
    <citation type="journal article" date="2005" name="Science">
        <title>The transcriptional landscape of the mammalian genome.</title>
        <authorList>
            <person name="Carninci P."/>
            <person name="Kasukawa T."/>
            <person name="Katayama S."/>
            <person name="Gough J."/>
            <person name="Frith M.C."/>
            <person name="Maeda N."/>
            <person name="Oyama R."/>
            <person name="Ravasi T."/>
            <person name="Lenhard B."/>
            <person name="Wells C."/>
            <person name="Kodzius R."/>
            <person name="Shimokawa K."/>
            <person name="Bajic V.B."/>
            <person name="Brenner S.E."/>
            <person name="Batalov S."/>
            <person name="Forrest A.R."/>
            <person name="Zavolan M."/>
            <person name="Davis M.J."/>
            <person name="Wilming L.G."/>
            <person name="Aidinis V."/>
            <person name="Allen J.E."/>
            <person name="Ambesi-Impiombato A."/>
            <person name="Apweiler R."/>
            <person name="Aturaliya R.N."/>
            <person name="Bailey T.L."/>
            <person name="Bansal M."/>
            <person name="Baxter L."/>
            <person name="Beisel K.W."/>
            <person name="Bersano T."/>
            <person name="Bono H."/>
            <person name="Chalk A.M."/>
            <person name="Chiu K.P."/>
            <person name="Choudhary V."/>
            <person name="Christoffels A."/>
            <person name="Clutterbuck D.R."/>
            <person name="Crowe M.L."/>
            <person name="Dalla E."/>
            <person name="Dalrymple B.P."/>
            <person name="de Bono B."/>
            <person name="Della Gatta G."/>
            <person name="di Bernardo D."/>
            <person name="Down T."/>
            <person name="Engstrom P."/>
            <person name="Fagiolini M."/>
            <person name="Faulkner G."/>
            <person name="Fletcher C.F."/>
            <person name="Fukushima T."/>
            <person name="Furuno M."/>
            <person name="Futaki S."/>
            <person name="Gariboldi M."/>
            <person name="Georgii-Hemming P."/>
            <person name="Gingeras T.R."/>
            <person name="Gojobori T."/>
            <person name="Green R.E."/>
            <person name="Gustincich S."/>
            <person name="Harbers M."/>
            <person name="Hayashi Y."/>
            <person name="Hensch T.K."/>
            <person name="Hirokawa N."/>
            <person name="Hill D."/>
            <person name="Huminiecki L."/>
            <person name="Iacono M."/>
            <person name="Ikeo K."/>
            <person name="Iwama A."/>
            <person name="Ishikawa T."/>
            <person name="Jakt M."/>
            <person name="Kanapin A."/>
            <person name="Katoh M."/>
            <person name="Kawasawa Y."/>
            <person name="Kelso J."/>
            <person name="Kitamura H."/>
            <person name="Kitano H."/>
            <person name="Kollias G."/>
            <person name="Krishnan S.P."/>
            <person name="Kruger A."/>
            <person name="Kummerfeld S.K."/>
            <person name="Kurochkin I.V."/>
            <person name="Lareau L.F."/>
            <person name="Lazarevic D."/>
            <person name="Lipovich L."/>
            <person name="Liu J."/>
            <person name="Liuni S."/>
            <person name="McWilliam S."/>
            <person name="Madan Babu M."/>
            <person name="Madera M."/>
            <person name="Marchionni L."/>
            <person name="Matsuda H."/>
            <person name="Matsuzawa S."/>
            <person name="Miki H."/>
            <person name="Mignone F."/>
            <person name="Miyake S."/>
            <person name="Morris K."/>
            <person name="Mottagui-Tabar S."/>
            <person name="Mulder N."/>
            <person name="Nakano N."/>
            <person name="Nakauchi H."/>
            <person name="Ng P."/>
            <person name="Nilsson R."/>
            <person name="Nishiguchi S."/>
            <person name="Nishikawa S."/>
            <person name="Nori F."/>
            <person name="Ohara O."/>
            <person name="Okazaki Y."/>
            <person name="Orlando V."/>
            <person name="Pang K.C."/>
            <person name="Pavan W.J."/>
            <person name="Pavesi G."/>
            <person name="Pesole G."/>
            <person name="Petrovsky N."/>
            <person name="Piazza S."/>
            <person name="Reed J."/>
            <person name="Reid J.F."/>
            <person name="Ring B.Z."/>
            <person name="Ringwald M."/>
            <person name="Rost B."/>
            <person name="Ruan Y."/>
            <person name="Salzberg S.L."/>
            <person name="Sandelin A."/>
            <person name="Schneider C."/>
            <person name="Schoenbach C."/>
            <person name="Sekiguchi K."/>
            <person name="Semple C.A."/>
            <person name="Seno S."/>
            <person name="Sessa L."/>
            <person name="Sheng Y."/>
            <person name="Shibata Y."/>
            <person name="Shimada H."/>
            <person name="Shimada K."/>
            <person name="Silva D."/>
            <person name="Sinclair B."/>
            <person name="Sperling S."/>
            <person name="Stupka E."/>
            <person name="Sugiura K."/>
            <person name="Sultana R."/>
            <person name="Takenaka Y."/>
            <person name="Taki K."/>
            <person name="Tammoja K."/>
            <person name="Tan S.L."/>
            <person name="Tang S."/>
            <person name="Taylor M.S."/>
            <person name="Tegner J."/>
            <person name="Teichmann S.A."/>
            <person name="Ueda H.R."/>
            <person name="van Nimwegen E."/>
            <person name="Verardo R."/>
            <person name="Wei C.L."/>
            <person name="Yagi K."/>
            <person name="Yamanishi H."/>
            <person name="Zabarovsky E."/>
            <person name="Zhu S."/>
            <person name="Zimmer A."/>
            <person name="Hide W."/>
            <person name="Bult C."/>
            <person name="Grimmond S.M."/>
            <person name="Teasdale R.D."/>
            <person name="Liu E.T."/>
            <person name="Brusic V."/>
            <person name="Quackenbush J."/>
            <person name="Wahlestedt C."/>
            <person name="Mattick J.S."/>
            <person name="Hume D.A."/>
            <person name="Kai C."/>
            <person name="Sasaki D."/>
            <person name="Tomaru Y."/>
            <person name="Fukuda S."/>
            <person name="Kanamori-Katayama M."/>
            <person name="Suzuki M."/>
            <person name="Aoki J."/>
            <person name="Arakawa T."/>
            <person name="Iida J."/>
            <person name="Imamura K."/>
            <person name="Itoh M."/>
            <person name="Kato T."/>
            <person name="Kawaji H."/>
            <person name="Kawagashira N."/>
            <person name="Kawashima T."/>
            <person name="Kojima M."/>
            <person name="Kondo S."/>
            <person name="Konno H."/>
            <person name="Nakano K."/>
            <person name="Ninomiya N."/>
            <person name="Nishio T."/>
            <person name="Okada M."/>
            <person name="Plessy C."/>
            <person name="Shibata K."/>
            <person name="Shiraki T."/>
            <person name="Suzuki S."/>
            <person name="Tagami M."/>
            <person name="Waki K."/>
            <person name="Watahiki A."/>
            <person name="Okamura-Oho Y."/>
            <person name="Suzuki H."/>
            <person name="Kawai J."/>
            <person name="Hayashizaki Y."/>
        </authorList>
    </citation>
    <scope>NUCLEOTIDE SEQUENCE [LARGE SCALE MRNA] (ISOFORM 1)</scope>
    <source>
        <strain>C57BL/6J</strain>
        <tissue>Lung</tissue>
    </source>
</reference>
<reference key="4">
    <citation type="submission" date="2005-09" db="EMBL/GenBank/DDBJ databases">
        <authorList>
            <person name="Mural R.J."/>
            <person name="Adams M.D."/>
            <person name="Myers E.W."/>
            <person name="Smith H.O."/>
            <person name="Venter J.C."/>
        </authorList>
    </citation>
    <scope>NUCLEOTIDE SEQUENCE [LARGE SCALE GENOMIC DNA]</scope>
</reference>
<reference key="5">
    <citation type="journal article" date="1996" name="Genomics">
        <title>The gene for transcription factor GATA-6 resides on mouse chromosome 18 and is expressed in myocardium and vascular smooth muscle.</title>
        <authorList>
            <person name="Narita N."/>
            <person name="Heikinheimo M."/>
            <person name="Bielinska M."/>
            <person name="White R.A."/>
            <person name="Wilson D.B."/>
        </authorList>
    </citation>
    <scope>NUCLEOTIDE SEQUENCE [MRNA] OF 384-589 (ISOFORM 1)</scope>
    <source>
        <strain>BALB/cJ</strain>
        <tissue>Heart</tissue>
    </source>
</reference>
<reference key="6">
    <citation type="journal article" date="1999" name="J. Biol. Chem.">
        <title>The human and mouse GATA-6 genes utilize two promoters and two initiation codons.</title>
        <authorList>
            <person name="Brewer A."/>
            <person name="Gove C."/>
            <person name="Davies A."/>
            <person name="McNulty C."/>
            <person name="Barrow D."/>
            <person name="Koutsourakis M."/>
            <person name="Farzaneh F."/>
            <person name="Pizzey J."/>
            <person name="Bomford A."/>
            <person name="Patient R."/>
        </authorList>
    </citation>
    <scope>ALTERNATIVE INITIATION</scope>
</reference>
<reference key="7">
    <citation type="journal article" date="2004" name="Development">
        <title>SMAD-mediated modulation of YY1 activity regulates the BMP response and cardiac-specific expression of a GATA4/5/6-dependent chick Nkx2.5 enhancer.</title>
        <authorList>
            <person name="Lee K.H."/>
            <person name="Evans S."/>
            <person name="Ruan T.Y."/>
            <person name="Lassar A.B."/>
        </authorList>
    </citation>
    <scope>FUNCTION</scope>
    <scope>DNA-BINDING</scope>
</reference>
<reference key="8">
    <citation type="journal article" date="2005" name="Mol. Cell. Biol.">
        <title>LMCD1/Dyxin is a novel transcriptional cofactor that restricts GATA6 function by inhibiting DNA binding.</title>
        <authorList>
            <person name="Rath N."/>
            <person name="Wang Z."/>
            <person name="Lu M.M."/>
            <person name="Morrisey E.E."/>
        </authorList>
    </citation>
    <scope>SUBCELLULAR LOCATION</scope>
    <scope>INTERACTION WITH LMCD1</scope>
    <scope>DOMAIN GATA-TYPE ZINC-FINGER</scope>
</reference>
<reference key="9">
    <citation type="journal article" date="2009" name="Proc. Natl. Acad. Sci. U.S.A.">
        <title>GATA6 mutations cause human cardiac outflow tract defects by disrupting semaphorin-plexin signaling.</title>
        <authorList>
            <person name="Kodo K."/>
            <person name="Nishizawa T."/>
            <person name="Furutani M."/>
            <person name="Arai S."/>
            <person name="Yamamura E."/>
            <person name="Joo K."/>
            <person name="Takahashi T."/>
            <person name="Matsuoka R."/>
            <person name="Yamagishi H."/>
        </authorList>
    </citation>
    <scope>FUNCTION</scope>
</reference>
<protein>
    <recommendedName>
        <fullName>Transcription factor GATA-6</fullName>
    </recommendedName>
    <alternativeName>
        <fullName>GATA-binding factor 6</fullName>
    </alternativeName>
</protein>